<gene>
    <name evidence="1" type="primary">rnp2</name>
    <name type="synonym">rnpB</name>
    <name type="ordered locus">MA_1781</name>
</gene>
<evidence type="ECO:0000255" key="1">
    <source>
        <dbReference type="HAMAP-Rule" id="MF_00755"/>
    </source>
</evidence>
<name>RNP2_METAC</name>
<dbReference type="EC" id="3.1.26.5" evidence="1"/>
<dbReference type="EMBL" id="AE010299">
    <property type="protein sequence ID" value="AAM05187.1"/>
    <property type="molecule type" value="Genomic_DNA"/>
</dbReference>
<dbReference type="RefSeq" id="WP_011021784.1">
    <property type="nucleotide sequence ID" value="NC_003552.1"/>
</dbReference>
<dbReference type="SMR" id="Q8TPX3"/>
<dbReference type="STRING" id="188937.MA_1781"/>
<dbReference type="EnsemblBacteria" id="AAM05187">
    <property type="protein sequence ID" value="AAM05187"/>
    <property type="gene ID" value="MA_1781"/>
</dbReference>
<dbReference type="GeneID" id="1473670"/>
<dbReference type="KEGG" id="mac:MA_1781"/>
<dbReference type="HOGENOM" id="CLU_137733_1_0_2"/>
<dbReference type="InParanoid" id="Q8TPX3"/>
<dbReference type="OrthoDB" id="19261at2157"/>
<dbReference type="PhylomeDB" id="Q8TPX3"/>
<dbReference type="Proteomes" id="UP000002487">
    <property type="component" value="Chromosome"/>
</dbReference>
<dbReference type="GO" id="GO:0005737">
    <property type="term" value="C:cytoplasm"/>
    <property type="evidence" value="ECO:0007669"/>
    <property type="project" value="UniProtKB-SubCell"/>
</dbReference>
<dbReference type="GO" id="GO:0030677">
    <property type="term" value="C:ribonuclease P complex"/>
    <property type="evidence" value="ECO:0007669"/>
    <property type="project" value="UniProtKB-UniRule"/>
</dbReference>
<dbReference type="GO" id="GO:0004526">
    <property type="term" value="F:ribonuclease P activity"/>
    <property type="evidence" value="ECO:0007669"/>
    <property type="project" value="UniProtKB-UniRule"/>
</dbReference>
<dbReference type="GO" id="GO:0001682">
    <property type="term" value="P:tRNA 5'-leader removal"/>
    <property type="evidence" value="ECO:0007669"/>
    <property type="project" value="UniProtKB-UniRule"/>
</dbReference>
<dbReference type="Gene3D" id="3.30.70.3250">
    <property type="entry name" value="Ribonuclease P, Pop5 subunit"/>
    <property type="match status" value="1"/>
</dbReference>
<dbReference type="HAMAP" id="MF_00755">
    <property type="entry name" value="RNase_P_2"/>
    <property type="match status" value="1"/>
</dbReference>
<dbReference type="InterPro" id="IPR002759">
    <property type="entry name" value="Pop5/Rpp14/Rnp2-like"/>
</dbReference>
<dbReference type="InterPro" id="IPR038085">
    <property type="entry name" value="Rnp2-like_sf"/>
</dbReference>
<dbReference type="InterPro" id="IPR016434">
    <property type="entry name" value="Rnp2_archaea"/>
</dbReference>
<dbReference type="PANTHER" id="PTHR15441">
    <property type="entry name" value="RIBONUCLEASE P PROTEIN SUBUNIT P14"/>
    <property type="match status" value="1"/>
</dbReference>
<dbReference type="PANTHER" id="PTHR15441:SF2">
    <property type="entry name" value="RIBONUCLEASE P_MRP PROTEIN SUBUNIT POP5"/>
    <property type="match status" value="1"/>
</dbReference>
<dbReference type="Pfam" id="PF01900">
    <property type="entry name" value="RNase_P_Rpp14"/>
    <property type="match status" value="1"/>
</dbReference>
<dbReference type="PIRSF" id="PIRSF004952">
    <property type="entry name" value="RNase_P_2"/>
    <property type="match status" value="1"/>
</dbReference>
<dbReference type="SUPFAM" id="SSF160350">
    <property type="entry name" value="Rnp2-like"/>
    <property type="match status" value="1"/>
</dbReference>
<feature type="chain" id="PRO_0000140019" description="Ribonuclease P protein component 2">
    <location>
        <begin position="1"/>
        <end position="132"/>
    </location>
</feature>
<protein>
    <recommendedName>
        <fullName evidence="1">Ribonuclease P protein component 2</fullName>
        <shortName evidence="1">RNase P component 2</shortName>
        <ecNumber evidence="1">3.1.26.5</ecNumber>
    </recommendedName>
    <alternativeName>
        <fullName evidence="1">Pop5</fullName>
    </alternativeName>
</protein>
<accession>Q8TPX3</accession>
<sequence length="132" mass="14556">MKRLLPSLRTKKRYLAFELISEEPAGRGDIVKEVISSASSLLGDITTSDCDIRVLGFEAGKGIIQCSHTRVKETRAALATLTRVNGKRATLHVLGASGTVKKATEKFLKDYTVFEPEIHEKRDSRKTPGKVD</sequence>
<organism>
    <name type="scientific">Methanosarcina acetivorans (strain ATCC 35395 / DSM 2834 / JCM 12185 / C2A)</name>
    <dbReference type="NCBI Taxonomy" id="188937"/>
    <lineage>
        <taxon>Archaea</taxon>
        <taxon>Methanobacteriati</taxon>
        <taxon>Methanobacteriota</taxon>
        <taxon>Stenosarchaea group</taxon>
        <taxon>Methanomicrobia</taxon>
        <taxon>Methanosarcinales</taxon>
        <taxon>Methanosarcinaceae</taxon>
        <taxon>Methanosarcina</taxon>
    </lineage>
</organism>
<proteinExistence type="inferred from homology"/>
<keyword id="KW-0963">Cytoplasm</keyword>
<keyword id="KW-0255">Endonuclease</keyword>
<keyword id="KW-0378">Hydrolase</keyword>
<keyword id="KW-0540">Nuclease</keyword>
<keyword id="KW-1185">Reference proteome</keyword>
<keyword id="KW-0819">tRNA processing</keyword>
<comment type="function">
    <text evidence="1">Part of ribonuclease P, a protein complex that generates mature tRNA molecules by cleaving their 5'-ends.</text>
</comment>
<comment type="catalytic activity">
    <reaction evidence="1">
        <text>Endonucleolytic cleavage of RNA, removing 5'-extranucleotides from tRNA precursor.</text>
        <dbReference type="EC" id="3.1.26.5"/>
    </reaction>
</comment>
<comment type="subunit">
    <text evidence="1">Consists of a catalytic RNA component and at least 4-5 protein subunits.</text>
</comment>
<comment type="subcellular location">
    <subcellularLocation>
        <location evidence="1">Cytoplasm</location>
    </subcellularLocation>
</comment>
<comment type="similarity">
    <text evidence="1">Belongs to the eukaryotic/archaeal RNase P protein component 2 family.</text>
</comment>
<reference key="1">
    <citation type="journal article" date="2002" name="Genome Res.">
        <title>The genome of Methanosarcina acetivorans reveals extensive metabolic and physiological diversity.</title>
        <authorList>
            <person name="Galagan J.E."/>
            <person name="Nusbaum C."/>
            <person name="Roy A."/>
            <person name="Endrizzi M.G."/>
            <person name="Macdonald P."/>
            <person name="FitzHugh W."/>
            <person name="Calvo S."/>
            <person name="Engels R."/>
            <person name="Smirnov S."/>
            <person name="Atnoor D."/>
            <person name="Brown A."/>
            <person name="Allen N."/>
            <person name="Naylor J."/>
            <person name="Stange-Thomann N."/>
            <person name="DeArellano K."/>
            <person name="Johnson R."/>
            <person name="Linton L."/>
            <person name="McEwan P."/>
            <person name="McKernan K."/>
            <person name="Talamas J."/>
            <person name="Tirrell A."/>
            <person name="Ye W."/>
            <person name="Zimmer A."/>
            <person name="Barber R.D."/>
            <person name="Cann I."/>
            <person name="Graham D.E."/>
            <person name="Grahame D.A."/>
            <person name="Guss A.M."/>
            <person name="Hedderich R."/>
            <person name="Ingram-Smith C."/>
            <person name="Kuettner H.C."/>
            <person name="Krzycki J.A."/>
            <person name="Leigh J.A."/>
            <person name="Li W."/>
            <person name="Liu J."/>
            <person name="Mukhopadhyay B."/>
            <person name="Reeve J.N."/>
            <person name="Smith K."/>
            <person name="Springer T.A."/>
            <person name="Umayam L.A."/>
            <person name="White O."/>
            <person name="White R.H."/>
            <person name="de Macario E.C."/>
            <person name="Ferry J.G."/>
            <person name="Jarrell K.F."/>
            <person name="Jing H."/>
            <person name="Macario A.J.L."/>
            <person name="Paulsen I.T."/>
            <person name="Pritchett M."/>
            <person name="Sowers K.R."/>
            <person name="Swanson R.V."/>
            <person name="Zinder S.H."/>
            <person name="Lander E."/>
            <person name="Metcalf W.W."/>
            <person name="Birren B."/>
        </authorList>
    </citation>
    <scope>NUCLEOTIDE SEQUENCE [LARGE SCALE GENOMIC DNA]</scope>
    <source>
        <strain>ATCC 35395 / DSM 2834 / JCM 12185 / C2A</strain>
    </source>
</reference>